<reference key="1">
    <citation type="journal article" date="1999" name="Nature">
        <title>Sequence and analysis of chromosome 4 of the plant Arabidopsis thaliana.</title>
        <authorList>
            <person name="Mayer K.F.X."/>
            <person name="Schueller C."/>
            <person name="Wambutt R."/>
            <person name="Murphy G."/>
            <person name="Volckaert G."/>
            <person name="Pohl T."/>
            <person name="Duesterhoeft A."/>
            <person name="Stiekema W."/>
            <person name="Entian K.-D."/>
            <person name="Terryn N."/>
            <person name="Harris B."/>
            <person name="Ansorge W."/>
            <person name="Brandt P."/>
            <person name="Grivell L.A."/>
            <person name="Rieger M."/>
            <person name="Weichselgartner M."/>
            <person name="de Simone V."/>
            <person name="Obermaier B."/>
            <person name="Mache R."/>
            <person name="Mueller M."/>
            <person name="Kreis M."/>
            <person name="Delseny M."/>
            <person name="Puigdomenech P."/>
            <person name="Watson M."/>
            <person name="Schmidtheini T."/>
            <person name="Reichert B."/>
            <person name="Portetelle D."/>
            <person name="Perez-Alonso M."/>
            <person name="Boutry M."/>
            <person name="Bancroft I."/>
            <person name="Vos P."/>
            <person name="Hoheisel J."/>
            <person name="Zimmermann W."/>
            <person name="Wedler H."/>
            <person name="Ridley P."/>
            <person name="Langham S.-A."/>
            <person name="McCullagh B."/>
            <person name="Bilham L."/>
            <person name="Robben J."/>
            <person name="van der Schueren J."/>
            <person name="Grymonprez B."/>
            <person name="Chuang Y.-J."/>
            <person name="Vandenbussche F."/>
            <person name="Braeken M."/>
            <person name="Weltjens I."/>
            <person name="Voet M."/>
            <person name="Bastiaens I."/>
            <person name="Aert R."/>
            <person name="Defoor E."/>
            <person name="Weitzenegger T."/>
            <person name="Bothe G."/>
            <person name="Ramsperger U."/>
            <person name="Hilbert H."/>
            <person name="Braun M."/>
            <person name="Holzer E."/>
            <person name="Brandt A."/>
            <person name="Peters S."/>
            <person name="van Staveren M."/>
            <person name="Dirkse W."/>
            <person name="Mooijman P."/>
            <person name="Klein Lankhorst R."/>
            <person name="Rose M."/>
            <person name="Hauf J."/>
            <person name="Koetter P."/>
            <person name="Berneiser S."/>
            <person name="Hempel S."/>
            <person name="Feldpausch M."/>
            <person name="Lamberth S."/>
            <person name="Van den Daele H."/>
            <person name="De Keyser A."/>
            <person name="Buysshaert C."/>
            <person name="Gielen J."/>
            <person name="Villarroel R."/>
            <person name="De Clercq R."/>
            <person name="van Montagu M."/>
            <person name="Rogers J."/>
            <person name="Cronin A."/>
            <person name="Quail M.A."/>
            <person name="Bray-Allen S."/>
            <person name="Clark L."/>
            <person name="Doggett J."/>
            <person name="Hall S."/>
            <person name="Kay M."/>
            <person name="Lennard N."/>
            <person name="McLay K."/>
            <person name="Mayes R."/>
            <person name="Pettett A."/>
            <person name="Rajandream M.A."/>
            <person name="Lyne M."/>
            <person name="Benes V."/>
            <person name="Rechmann S."/>
            <person name="Borkova D."/>
            <person name="Bloecker H."/>
            <person name="Scharfe M."/>
            <person name="Grimm M."/>
            <person name="Loehnert T.-H."/>
            <person name="Dose S."/>
            <person name="de Haan M."/>
            <person name="Maarse A.C."/>
            <person name="Schaefer M."/>
            <person name="Mueller-Auer S."/>
            <person name="Gabel C."/>
            <person name="Fuchs M."/>
            <person name="Fartmann B."/>
            <person name="Granderath K."/>
            <person name="Dauner D."/>
            <person name="Herzl A."/>
            <person name="Neumann S."/>
            <person name="Argiriou A."/>
            <person name="Vitale D."/>
            <person name="Liguori R."/>
            <person name="Piravandi E."/>
            <person name="Massenet O."/>
            <person name="Quigley F."/>
            <person name="Clabauld G."/>
            <person name="Muendlein A."/>
            <person name="Felber R."/>
            <person name="Schnabl S."/>
            <person name="Hiller R."/>
            <person name="Schmidt W."/>
            <person name="Lecharny A."/>
            <person name="Aubourg S."/>
            <person name="Chefdor F."/>
            <person name="Cooke R."/>
            <person name="Berger C."/>
            <person name="Monfort A."/>
            <person name="Casacuberta E."/>
            <person name="Gibbons T."/>
            <person name="Weber N."/>
            <person name="Vandenbol M."/>
            <person name="Bargues M."/>
            <person name="Terol J."/>
            <person name="Torres A."/>
            <person name="Perez-Perez A."/>
            <person name="Purnelle B."/>
            <person name="Bent E."/>
            <person name="Johnson S."/>
            <person name="Tacon D."/>
            <person name="Jesse T."/>
            <person name="Heijnen L."/>
            <person name="Schwarz S."/>
            <person name="Scholler P."/>
            <person name="Heber S."/>
            <person name="Francs P."/>
            <person name="Bielke C."/>
            <person name="Frishman D."/>
            <person name="Haase D."/>
            <person name="Lemcke K."/>
            <person name="Mewes H.-W."/>
            <person name="Stocker S."/>
            <person name="Zaccaria P."/>
            <person name="Bevan M."/>
            <person name="Wilson R.K."/>
            <person name="de la Bastide M."/>
            <person name="Habermann K."/>
            <person name="Parnell L."/>
            <person name="Dedhia N."/>
            <person name="Gnoj L."/>
            <person name="Schutz K."/>
            <person name="Huang E."/>
            <person name="Spiegel L."/>
            <person name="Sekhon M."/>
            <person name="Murray J."/>
            <person name="Sheet P."/>
            <person name="Cordes M."/>
            <person name="Abu-Threideh J."/>
            <person name="Stoneking T."/>
            <person name="Kalicki J."/>
            <person name="Graves T."/>
            <person name="Harmon G."/>
            <person name="Edwards J."/>
            <person name="Latreille P."/>
            <person name="Courtney L."/>
            <person name="Cloud J."/>
            <person name="Abbott A."/>
            <person name="Scott K."/>
            <person name="Johnson D."/>
            <person name="Minx P."/>
            <person name="Bentley D."/>
            <person name="Fulton B."/>
            <person name="Miller N."/>
            <person name="Greco T."/>
            <person name="Kemp K."/>
            <person name="Kramer J."/>
            <person name="Fulton L."/>
            <person name="Mardis E."/>
            <person name="Dante M."/>
            <person name="Pepin K."/>
            <person name="Hillier L.W."/>
            <person name="Nelson J."/>
            <person name="Spieth J."/>
            <person name="Ryan E."/>
            <person name="Andrews S."/>
            <person name="Geisel C."/>
            <person name="Layman D."/>
            <person name="Du H."/>
            <person name="Ali J."/>
            <person name="Berghoff A."/>
            <person name="Jones K."/>
            <person name="Drone K."/>
            <person name="Cotton M."/>
            <person name="Joshu C."/>
            <person name="Antonoiu B."/>
            <person name="Zidanic M."/>
            <person name="Strong C."/>
            <person name="Sun H."/>
            <person name="Lamar B."/>
            <person name="Yordan C."/>
            <person name="Ma P."/>
            <person name="Zhong J."/>
            <person name="Preston R."/>
            <person name="Vil D."/>
            <person name="Shekher M."/>
            <person name="Matero A."/>
            <person name="Shah R."/>
            <person name="Swaby I.K."/>
            <person name="O'Shaughnessy A."/>
            <person name="Rodriguez M."/>
            <person name="Hoffman J."/>
            <person name="Till S."/>
            <person name="Granat S."/>
            <person name="Shohdy N."/>
            <person name="Hasegawa A."/>
            <person name="Hameed A."/>
            <person name="Lodhi M."/>
            <person name="Johnson A."/>
            <person name="Chen E."/>
            <person name="Marra M.A."/>
            <person name="Martienssen R."/>
            <person name="McCombie W.R."/>
        </authorList>
    </citation>
    <scope>NUCLEOTIDE SEQUENCE [LARGE SCALE GENOMIC DNA]</scope>
    <source>
        <strain>cv. Columbia</strain>
    </source>
</reference>
<reference key="2">
    <citation type="journal article" date="2017" name="Plant J.">
        <title>Araport11: a complete reannotation of the Arabidopsis thaliana reference genome.</title>
        <authorList>
            <person name="Cheng C.Y."/>
            <person name="Krishnakumar V."/>
            <person name="Chan A.P."/>
            <person name="Thibaud-Nissen F."/>
            <person name="Schobel S."/>
            <person name="Town C.D."/>
        </authorList>
    </citation>
    <scope>GENOME REANNOTATION</scope>
    <source>
        <strain>cv. Columbia</strain>
    </source>
</reference>
<reference key="3">
    <citation type="journal article" date="2014" name="Proc. Natl. Acad. Sci. U.S.A.">
        <title>The Golgi localized bifunctional UDP-rhamnose/UDP-galactose transporter family of Arabidopsis.</title>
        <authorList>
            <person name="Rautengarten C."/>
            <person name="Ebert B."/>
            <person name="Moreno I."/>
            <person name="Temple H."/>
            <person name="Herter T."/>
            <person name="Link B."/>
            <person name="Donas-Cofre D."/>
            <person name="Moreno A."/>
            <person name="Saez-Aguayo S."/>
            <person name="Blanco F."/>
            <person name="Mortimer J.C."/>
            <person name="Schultink A."/>
            <person name="Reiter W.D."/>
            <person name="Dupree P."/>
            <person name="Pauly M."/>
            <person name="Heazlewood J.L."/>
            <person name="Scheller H.V."/>
            <person name="Orellana A."/>
        </authorList>
    </citation>
    <scope>GENE FAMILY</scope>
</reference>
<gene>
    <name type="ordered locus">At4g32390</name>
    <name type="ORF">F8B4.90</name>
</gene>
<accession>Q9SUV2</accession>
<evidence type="ECO:0000255" key="1"/>
<evidence type="ECO:0000256" key="2">
    <source>
        <dbReference type="SAM" id="MobiDB-lite"/>
    </source>
</evidence>
<evidence type="ECO:0000305" key="3"/>
<organism>
    <name type="scientific">Arabidopsis thaliana</name>
    <name type="common">Mouse-ear cress</name>
    <dbReference type="NCBI Taxonomy" id="3702"/>
    <lineage>
        <taxon>Eukaryota</taxon>
        <taxon>Viridiplantae</taxon>
        <taxon>Streptophyta</taxon>
        <taxon>Embryophyta</taxon>
        <taxon>Tracheophyta</taxon>
        <taxon>Spermatophyta</taxon>
        <taxon>Magnoliopsida</taxon>
        <taxon>eudicotyledons</taxon>
        <taxon>Gunneridae</taxon>
        <taxon>Pentapetalae</taxon>
        <taxon>rosids</taxon>
        <taxon>malvids</taxon>
        <taxon>Brassicales</taxon>
        <taxon>Brassicaceae</taxon>
        <taxon>Camelineae</taxon>
        <taxon>Arabidopsis</taxon>
    </lineage>
</organism>
<dbReference type="EMBL" id="AL034567">
    <property type="protein sequence ID" value="CAA22566.1"/>
    <property type="molecule type" value="Genomic_DNA"/>
</dbReference>
<dbReference type="EMBL" id="AL161581">
    <property type="protein sequence ID" value="CAB79956.1"/>
    <property type="molecule type" value="Genomic_DNA"/>
</dbReference>
<dbReference type="EMBL" id="CP002687">
    <property type="protein sequence ID" value="AEE86051.1"/>
    <property type="molecule type" value="Genomic_DNA"/>
</dbReference>
<dbReference type="PIR" id="T05349">
    <property type="entry name" value="T05349"/>
</dbReference>
<dbReference type="RefSeq" id="NP_194965.1">
    <property type="nucleotide sequence ID" value="NM_119391.2"/>
</dbReference>
<dbReference type="SMR" id="Q9SUV2"/>
<dbReference type="FunCoup" id="Q9SUV2">
    <property type="interactions" value="609"/>
</dbReference>
<dbReference type="STRING" id="3702.Q9SUV2"/>
<dbReference type="iPTMnet" id="Q9SUV2"/>
<dbReference type="PaxDb" id="3702-AT4G32390.1"/>
<dbReference type="ProteomicsDB" id="248675"/>
<dbReference type="EnsemblPlants" id="AT4G32390.1">
    <property type="protein sequence ID" value="AT4G32390.1"/>
    <property type="gene ID" value="AT4G32390"/>
</dbReference>
<dbReference type="GeneID" id="829374"/>
<dbReference type="Gramene" id="AT4G32390.1">
    <property type="protein sequence ID" value="AT4G32390.1"/>
    <property type="gene ID" value="AT4G32390"/>
</dbReference>
<dbReference type="KEGG" id="ath:AT4G32390"/>
<dbReference type="Araport" id="AT4G32390"/>
<dbReference type="TAIR" id="AT4G32390"/>
<dbReference type="eggNOG" id="KOG1441">
    <property type="taxonomic scope" value="Eukaryota"/>
</dbReference>
<dbReference type="HOGENOM" id="CLU_022332_3_0_1"/>
<dbReference type="InParanoid" id="Q9SUV2"/>
<dbReference type="OMA" id="RETYIRS"/>
<dbReference type="OrthoDB" id="6418713at2759"/>
<dbReference type="PhylomeDB" id="Q9SUV2"/>
<dbReference type="PRO" id="PR:Q9SUV2"/>
<dbReference type="Proteomes" id="UP000006548">
    <property type="component" value="Chromosome 4"/>
</dbReference>
<dbReference type="ExpressionAtlas" id="Q9SUV2">
    <property type="expression patterns" value="baseline and differential"/>
</dbReference>
<dbReference type="GO" id="GO:0005768">
    <property type="term" value="C:endosome"/>
    <property type="evidence" value="ECO:0007005"/>
    <property type="project" value="TAIR"/>
</dbReference>
<dbReference type="GO" id="GO:0005794">
    <property type="term" value="C:Golgi apparatus"/>
    <property type="evidence" value="ECO:0007005"/>
    <property type="project" value="TAIR"/>
</dbReference>
<dbReference type="GO" id="GO:0000138">
    <property type="term" value="C:Golgi trans cisterna"/>
    <property type="evidence" value="ECO:0007005"/>
    <property type="project" value="TAIR"/>
</dbReference>
<dbReference type="GO" id="GO:0005886">
    <property type="term" value="C:plasma membrane"/>
    <property type="evidence" value="ECO:0007005"/>
    <property type="project" value="TAIR"/>
</dbReference>
<dbReference type="GO" id="GO:0005802">
    <property type="term" value="C:trans-Golgi network"/>
    <property type="evidence" value="ECO:0007005"/>
    <property type="project" value="TAIR"/>
</dbReference>
<dbReference type="InterPro" id="IPR004853">
    <property type="entry name" value="Sugar_P_trans_dom"/>
</dbReference>
<dbReference type="InterPro" id="IPR050186">
    <property type="entry name" value="TPT_transporter"/>
</dbReference>
<dbReference type="PANTHER" id="PTHR11132">
    <property type="entry name" value="SOLUTE CARRIER FAMILY 35"/>
    <property type="match status" value="1"/>
</dbReference>
<dbReference type="Pfam" id="PF03151">
    <property type="entry name" value="TPT"/>
    <property type="match status" value="1"/>
</dbReference>
<proteinExistence type="inferred from homology"/>
<protein>
    <recommendedName>
        <fullName>Probable sugar phosphate/phosphate translocator At4g32390</fullName>
    </recommendedName>
</protein>
<feature type="chain" id="PRO_0000406114" description="Probable sugar phosphate/phosphate translocator At4g32390">
    <location>
        <begin position="1"/>
        <end position="350"/>
    </location>
</feature>
<feature type="transmembrane region" description="Helical" evidence="1">
    <location>
        <begin position="15"/>
        <end position="35"/>
    </location>
</feature>
<feature type="transmembrane region" description="Helical" evidence="1">
    <location>
        <begin position="49"/>
        <end position="69"/>
    </location>
</feature>
<feature type="transmembrane region" description="Helical" evidence="1">
    <location>
        <begin position="89"/>
        <end position="109"/>
    </location>
</feature>
<feature type="transmembrane region" description="Helical" evidence="1">
    <location>
        <begin position="112"/>
        <end position="132"/>
    </location>
</feature>
<feature type="transmembrane region" description="Helical" evidence="1">
    <location>
        <begin position="146"/>
        <end position="166"/>
    </location>
</feature>
<feature type="transmembrane region" description="Helical" evidence="1">
    <location>
        <begin position="168"/>
        <end position="188"/>
    </location>
</feature>
<feature type="transmembrane region" description="Helical" evidence="1">
    <location>
        <begin position="205"/>
        <end position="225"/>
    </location>
</feature>
<feature type="transmembrane region" description="Helical" evidence="1">
    <location>
        <begin position="235"/>
        <end position="255"/>
    </location>
</feature>
<feature type="transmembrane region" description="Helical" evidence="1">
    <location>
        <begin position="263"/>
        <end position="283"/>
    </location>
</feature>
<feature type="transmembrane region" description="Helical" evidence="1">
    <location>
        <begin position="286"/>
        <end position="306"/>
    </location>
</feature>
<feature type="domain" description="EamA">
    <location>
        <begin position="38"/>
        <end position="155"/>
    </location>
</feature>
<feature type="region of interest" description="Disordered" evidence="2">
    <location>
        <begin position="324"/>
        <end position="350"/>
    </location>
</feature>
<comment type="subcellular location">
    <subcellularLocation>
        <location evidence="3">Membrane</location>
        <topology evidence="3">Multi-pass membrane protein</topology>
    </subcellularLocation>
</comment>
<comment type="similarity">
    <text evidence="3">Belongs to the TPT transporter family. TPT (TC 2.A.7.9) subfamily.</text>
</comment>
<sequence>MGKGGALSDGVIKKILLSYTYVAIWIFLSFTVIVYNKYILDKKMYNWPFPITLTMIHMAFCSSLAVILIKVFKIVEPVSMSRDTYIRSVVPIGALYSLSLWLSNSAYIYLSVSFIQMLKALMPVAVYSIGVLLKKESFKSETMTNMLSISFGVAIAAYGEAKFDTWGVMLQLGAVAFEATRLVLIQILLTSKGINLNPITSLYYVAPCCLVFLFFPWIFVELPILRETSSFHFDFVIFGTNSVCAFALNLAVFLLVGKTSALTMNVAGVVKDWLLIAFSWSVIKDTVTPLNLFGYGLAFLGVAYYNHCKLQALKAKDAQKKVQQGDEEEAGKLLEERESEAAAKRNETED</sequence>
<keyword id="KW-0472">Membrane</keyword>
<keyword id="KW-1185">Reference proteome</keyword>
<keyword id="KW-0762">Sugar transport</keyword>
<keyword id="KW-0812">Transmembrane</keyword>
<keyword id="KW-1133">Transmembrane helix</keyword>
<keyword id="KW-0813">Transport</keyword>
<name>PT432_ARATH</name>